<reference key="1">
    <citation type="submission" date="1996-05" db="EMBL/GenBank/DDBJ databases">
        <title>Nucleotide sequence of the replication terminus region of Escherichia coli.</title>
        <authorList>
            <person name="Kitakawa M."/>
            <person name="Kasai H."/>
            <person name="Baba T."/>
            <person name="Honjo A."/>
            <person name="Isono K."/>
        </authorList>
    </citation>
    <scope>NUCLEOTIDE SEQUENCE [GENOMIC DNA]</scope>
    <source>
        <strain>K12</strain>
    </source>
</reference>
<reference key="2">
    <citation type="journal article" date="1996" name="DNA Res.">
        <title>A 570-kb DNA sequence of the Escherichia coli K-12 genome corresponding to the 28.0-40.1 min region on the linkage map.</title>
        <authorList>
            <person name="Aiba H."/>
            <person name="Baba T."/>
            <person name="Fujita K."/>
            <person name="Hayashi K."/>
            <person name="Inada T."/>
            <person name="Isono K."/>
            <person name="Itoh T."/>
            <person name="Kasai H."/>
            <person name="Kashimoto K."/>
            <person name="Kimura S."/>
            <person name="Kitakawa M."/>
            <person name="Kitagawa M."/>
            <person name="Makino K."/>
            <person name="Miki T."/>
            <person name="Mizobuchi K."/>
            <person name="Mori H."/>
            <person name="Mori T."/>
            <person name="Motomura K."/>
            <person name="Nakade S."/>
            <person name="Nakamura Y."/>
            <person name="Nashimoto H."/>
            <person name="Nishio Y."/>
            <person name="Oshima T."/>
            <person name="Saito N."/>
            <person name="Sampei G."/>
            <person name="Seki Y."/>
            <person name="Sivasundaram S."/>
            <person name="Tagami H."/>
            <person name="Takeda J."/>
            <person name="Takemoto K."/>
            <person name="Takeuchi Y."/>
            <person name="Wada C."/>
            <person name="Yamamoto Y."/>
            <person name="Horiuchi T."/>
        </authorList>
    </citation>
    <scope>NUCLEOTIDE SEQUENCE [LARGE SCALE GENOMIC DNA]</scope>
    <source>
        <strain>K12 / W3110 / ATCC 27325 / DSM 5911</strain>
    </source>
</reference>
<reference key="3">
    <citation type="journal article" date="1997" name="Science">
        <title>The complete genome sequence of Escherichia coli K-12.</title>
        <authorList>
            <person name="Blattner F.R."/>
            <person name="Plunkett G. III"/>
            <person name="Bloch C.A."/>
            <person name="Perna N.T."/>
            <person name="Burland V."/>
            <person name="Riley M."/>
            <person name="Collado-Vides J."/>
            <person name="Glasner J.D."/>
            <person name="Rode C.K."/>
            <person name="Mayhew G.F."/>
            <person name="Gregor J."/>
            <person name="Davis N.W."/>
            <person name="Kirkpatrick H.A."/>
            <person name="Goeden M.A."/>
            <person name="Rose D.J."/>
            <person name="Mau B."/>
            <person name="Shao Y."/>
        </authorList>
    </citation>
    <scope>NUCLEOTIDE SEQUENCE [LARGE SCALE GENOMIC DNA]</scope>
    <source>
        <strain>K12 / MG1655 / ATCC 47076</strain>
    </source>
</reference>
<reference key="4">
    <citation type="journal article" date="2006" name="Mol. Syst. Biol.">
        <title>Highly accurate genome sequences of Escherichia coli K-12 strains MG1655 and W3110.</title>
        <authorList>
            <person name="Hayashi K."/>
            <person name="Morooka N."/>
            <person name="Yamamoto Y."/>
            <person name="Fujita K."/>
            <person name="Isono K."/>
            <person name="Choi S."/>
            <person name="Ohtsubo E."/>
            <person name="Baba T."/>
            <person name="Wanner B.L."/>
            <person name="Mori H."/>
            <person name="Horiuchi T."/>
        </authorList>
    </citation>
    <scope>NUCLEOTIDE SEQUENCE [LARGE SCALE GENOMIC DNA]</scope>
    <source>
        <strain>K12 / W3110 / ATCC 27325 / DSM 5911</strain>
    </source>
</reference>
<reference key="5">
    <citation type="journal article" date="1995" name="Nucleic Acids Res.">
        <title>Cloning and characterization of the hrpA gene in the terC region of Escherichia coli that is highly similar to the DEAH family RNA helicase genes of Saccharomyces cerevisiae.</title>
        <authorList>
            <person name="Moriya H."/>
            <person name="Kasai H."/>
            <person name="Isono K."/>
        </authorList>
    </citation>
    <scope>NUCLEOTIDE SEQUENCE [GENOMIC DNA] OF 1-144</scope>
    <source>
        <strain>K12</strain>
    </source>
</reference>
<reference key="6">
    <citation type="journal article" date="1990" name="J. Bacteriol.">
        <title>Isolation and properties of acyl carrier protein phosphodiesterase of Escherichia coli.</title>
        <authorList>
            <person name="Fischl A.S."/>
            <person name="Kennedy E.P."/>
        </authorList>
    </citation>
    <scope>PROTEIN SEQUENCE OF 2-16</scope>
    <scope>PRELIMINARY FUNCTION</scope>
</reference>
<reference key="7">
    <citation type="journal article" date="2001" name="J. Biol. Chem.">
        <title>Putative ACP phosphodiesterase gene (acpD) encodes an azoreductase.</title>
        <authorList>
            <person name="Nakanishi M."/>
            <person name="Yatome C."/>
            <person name="Ishida N."/>
            <person name="Kitade Y."/>
        </authorList>
    </citation>
    <scope>PROTEIN SEQUENCE OF 2-8</scope>
    <scope>COFACTOR</scope>
    <scope>SUBUNIT</scope>
    <scope>FUNCTION</scope>
    <scope>CATALYTIC ACTIVITY</scope>
    <scope>ACTIVITY REGULATION</scope>
    <scope>BIOPHYSICOCHEMICAL PROPERTIES</scope>
    <scope>CHARACTERIZATION</scope>
    <source>
        <strain>K12 / JM109 / ATCC 53323</strain>
    </source>
</reference>
<reference key="8">
    <citation type="journal article" date="2009" name="J. Bacteriol.">
        <title>The Escherichia coli azoreductase AzoR is involved in resistance to thiol-specific stress caused by electrophilic quinones.</title>
        <authorList>
            <person name="Liu G."/>
            <person name="Zhou J."/>
            <person name="Fu Q.S."/>
            <person name="Wang J."/>
        </authorList>
    </citation>
    <scope>FUNCTION</scope>
    <scope>CATALYTIC ACTIVITY</scope>
    <scope>COFACTOR</scope>
    <scope>BIOPHYSICOCHEMICAL PROPERTIES</scope>
    <scope>INDUCTION</scope>
    <scope>DISRUPTION PHENOTYPE</scope>
    <source>
        <strain>K12 / JM109 / ATCC 53323</strain>
    </source>
</reference>
<reference key="9">
    <citation type="journal article" date="2013" name="J. Appl. Microbiol.">
        <title>Characteristics of major Escherichia coli reductases involved in aerobic nitro and azo reduction.</title>
        <authorList>
            <person name="Mercier C."/>
            <person name="Chalansonnet V."/>
            <person name="Orenga S."/>
            <person name="Gilbert C."/>
        </authorList>
    </citation>
    <scope>FUNCTION</scope>
</reference>
<reference key="10">
    <citation type="journal article" date="2005" name="Acta Crystallogr. F">
        <title>Crystallization and preliminary X-ray analysis of azoR (azoreductase) from Escherichia coli.</title>
        <authorList>
            <person name="Ito K."/>
            <person name="Nakanishi M."/>
            <person name="Lee W.-C."/>
            <person name="Sasaki H."/>
            <person name="Zenno S."/>
            <person name="Saigo K."/>
            <person name="Kitade Y."/>
            <person name="Tanokura M."/>
        </authorList>
    </citation>
    <scope>CRYSTALLIZATION</scope>
</reference>
<reference evidence="12" key="11">
    <citation type="submission" date="2004-06" db="PDB data bank">
        <title>Crystal structure of acyl carrier protein phosphodiesterase.</title>
        <authorList>
            <consortium name="New York structural genomics research consortium (NYSGRC)"/>
        </authorList>
    </citation>
    <scope>X-RAY CRYSTALLOGRAPHY (2.30 ANGSTROMS) OF 2-201</scope>
</reference>
<reference evidence="13 14" key="12">
    <citation type="journal article" date="2006" name="J. Biol. Chem.">
        <title>Three-dimensional structure of AzoR from Escherichia coli. An oxidereductase conserved in microorganisms.</title>
        <authorList>
            <person name="Ito K."/>
            <person name="Nakanishi M."/>
            <person name="Lee W.C."/>
            <person name="Sasaki H."/>
            <person name="Zenno S."/>
            <person name="Saigo K."/>
            <person name="Kitade Y."/>
            <person name="Tanokura M."/>
        </authorList>
    </citation>
    <scope>X-RAY CRYSTALLOGRAPHY (1.80 ANGSTROMS) OF 2-201 IN COMPLEXES WITH FMN</scope>
    <scope>SUBUNIT</scope>
</reference>
<reference evidence="15 16 17 18" key="13">
    <citation type="journal article" date="2008" name="J. Biol. Chem.">
        <title>Expansion of substrate specificity and catalytic mechanism of azoreductase by X-ray crystallography and site-directed mutagenesis.</title>
        <authorList>
            <person name="Ito K."/>
            <person name="Nakanishi M."/>
            <person name="Lee W.C."/>
            <person name="Zhi Y."/>
            <person name="Sasaki H."/>
            <person name="Zenno S."/>
            <person name="Saigo K."/>
            <person name="Kitade Y."/>
            <person name="Tanokura M."/>
        </authorList>
    </citation>
    <scope>X-RAY CRYSTALLOGRAPHY (1.40 ANGSTROMS) OF 2-201 OF OXIDIZED AND REDUCED FORMS IN COMPLEXES WITH FMN AND DICOUMAROL INHIBITOR</scope>
    <scope>FUNCTION</scope>
    <scope>CATALYTIC ACTIVITY</scope>
    <scope>COFACTOR</scope>
    <scope>BIOPHYSICOCHEMICAL PROPERTIES</scope>
    <scope>SUBUNIT</scope>
    <scope>MUTAGENESIS OF ARG-60; TYR-121 AND PHE-163</scope>
</reference>
<evidence type="ECO:0000255" key="1">
    <source>
        <dbReference type="HAMAP-Rule" id="MF_01216"/>
    </source>
</evidence>
<evidence type="ECO:0000269" key="2">
    <source>
    </source>
</evidence>
<evidence type="ECO:0000269" key="3">
    <source>
    </source>
</evidence>
<evidence type="ECO:0000269" key="4">
    <source>
    </source>
</evidence>
<evidence type="ECO:0000269" key="5">
    <source>
    </source>
</evidence>
<evidence type="ECO:0000269" key="6">
    <source>
    </source>
</evidence>
<evidence type="ECO:0000269" key="7">
    <source>
    </source>
</evidence>
<evidence type="ECO:0000303" key="8">
    <source>
    </source>
</evidence>
<evidence type="ECO:0000303" key="9">
    <source>
    </source>
</evidence>
<evidence type="ECO:0000305" key="10"/>
<evidence type="ECO:0000305" key="11">
    <source>
    </source>
</evidence>
<evidence type="ECO:0007744" key="12">
    <source>
        <dbReference type="PDB" id="1TIK"/>
    </source>
</evidence>
<evidence type="ECO:0007744" key="13">
    <source>
        <dbReference type="PDB" id="1V4B"/>
    </source>
</evidence>
<evidence type="ECO:0007744" key="14">
    <source>
        <dbReference type="PDB" id="2D5I"/>
    </source>
</evidence>
<evidence type="ECO:0007744" key="15">
    <source>
        <dbReference type="PDB" id="2Z98"/>
    </source>
</evidence>
<evidence type="ECO:0007744" key="16">
    <source>
        <dbReference type="PDB" id="2Z9B"/>
    </source>
</evidence>
<evidence type="ECO:0007744" key="17">
    <source>
        <dbReference type="PDB" id="2Z9C"/>
    </source>
</evidence>
<evidence type="ECO:0007744" key="18">
    <source>
        <dbReference type="PDB" id="2Z9D"/>
    </source>
</evidence>
<evidence type="ECO:0007829" key="19">
    <source>
        <dbReference type="PDB" id="2Z98"/>
    </source>
</evidence>
<evidence type="ECO:0007829" key="20">
    <source>
        <dbReference type="PDB" id="7N2X"/>
    </source>
</evidence>
<name>AZOR_ECOLI</name>
<protein>
    <recommendedName>
        <fullName evidence="1 10">FMN-dependent NADH:quinone oxidoreductase</fullName>
        <ecNumber evidence="1 5">1.6.5.-</ecNumber>
    </recommendedName>
    <alternativeName>
        <fullName evidence="1">Azo-dye reductase</fullName>
    </alternativeName>
    <alternativeName>
        <fullName evidence="1">FMN-dependent NADH-azo compound oxidoreductase</fullName>
    </alternativeName>
    <alternativeName>
        <fullName evidence="1 9">FMN-dependent NADH-azoreductase</fullName>
        <ecNumber evidence="1 2">1.7.1.17</ecNumber>
    </alternativeName>
</protein>
<comment type="function">
    <text evidence="5">Quinone reductase that provides resistance to thiol-specific stress caused by electrophilic quinones. Can reduce several benzo-, naphtho-, and anthraquinone compounds.</text>
</comment>
<comment type="function">
    <text evidence="2 4 7">Also exhibits azoreductase activity (PubMed:11583992, PubMed:18337254). Catalyzes the reductive cleavage of the azo bond in aromatic azo compounds to the corresponding amines (PubMed:11583992, PubMed:18337254). Can reduce ethyl red, methyl red and p-methyl red, but is not able to convert sulfonated azo dyes (PubMed:11583992, PubMed:18337254, PubMed:23795903). The stoichiometry implies that 2 cycles of the ping-pong mechanism are required for the cleavage of the azo bond (PubMed:11583992). Can also act as a nitroreductase and is able to reduce nitro compounds such as 7-nitrocoumarin-3-carboxylic acid (7NCCA) (PubMed:23795903).</text>
</comment>
<comment type="catalytic activity">
    <reaction evidence="1 5">
        <text>2 a quinone + NADH + H(+) = 2 a 1,4-benzosemiquinone + NAD(+)</text>
        <dbReference type="Rhea" id="RHEA:65952"/>
        <dbReference type="ChEBI" id="CHEBI:15378"/>
        <dbReference type="ChEBI" id="CHEBI:57540"/>
        <dbReference type="ChEBI" id="CHEBI:57945"/>
        <dbReference type="ChEBI" id="CHEBI:132124"/>
        <dbReference type="ChEBI" id="CHEBI:134225"/>
    </reaction>
    <physiologicalReaction direction="left-to-right" evidence="5">
        <dbReference type="Rhea" id="RHEA:65953"/>
    </physiologicalReaction>
</comment>
<comment type="catalytic activity">
    <reaction evidence="1 2 4">
        <text>N,N-dimethyl-1,4-phenylenediamine + anthranilate + 2 NAD(+) = 2-(4-dimethylaminophenyl)diazenylbenzoate + 2 NADH + 2 H(+)</text>
        <dbReference type="Rhea" id="RHEA:55872"/>
        <dbReference type="ChEBI" id="CHEBI:15378"/>
        <dbReference type="ChEBI" id="CHEBI:15783"/>
        <dbReference type="ChEBI" id="CHEBI:16567"/>
        <dbReference type="ChEBI" id="CHEBI:57540"/>
        <dbReference type="ChEBI" id="CHEBI:57945"/>
        <dbReference type="ChEBI" id="CHEBI:71579"/>
        <dbReference type="EC" id="1.7.1.17"/>
    </reaction>
    <physiologicalReaction direction="right-to-left" evidence="2 4">
        <dbReference type="Rhea" id="RHEA:55874"/>
    </physiologicalReaction>
</comment>
<comment type="cofactor">
    <cofactor evidence="1 2 4 5">
        <name>FMN</name>
        <dbReference type="ChEBI" id="CHEBI:58210"/>
    </cofactor>
    <text evidence="1 2 4">Binds 1 FMN per subunit.</text>
</comment>
<comment type="activity regulation">
    <text evidence="2">The azo reduction activity is inhibited by dicoumarol.</text>
</comment>
<comment type="biophysicochemical properties">
    <kinetics>
        <KM evidence="5">8.1 uM for anthaquinone-2-sulfonate</KM>
        <KM evidence="5">14.6 uM for antraquinone-2,6-disulfonate</KM>
        <KM evidence="5">87.3 uM for 2-hydroxy-1,4-naphthoquinone</KM>
        <KM evidence="5">1704 uM for 2-methyl-1,4-benzoquinone</KM>
        <KM evidence="2">17.9 uM for methyl red</KM>
        <KM evidence="4">41.9 uM for methyl red</KM>
        <KM evidence="4">266 uM for p-methyl red</KM>
        <KM evidence="2">31.6 uM for NADH</KM>
        <KM evidence="4">70.6 uM for NADH</KM>
        <text evidence="5">kcat is 1.1 sec(-1) with anthaquinone-2-sulfonate as substrate. kcat is 2.6 sec(-1) with antraquinone-2,6-disulfonate as substrate. kcat is 5.8 sec(-1) with 2-hydroxy-1,4-naphthoquinone as substrate. kcat is 72.0 sec(-1) with 2-methyl-1,4-benzoquinone as substrate.</text>
    </kinetics>
</comment>
<comment type="subunit">
    <text evidence="1 2 3 4">Homodimer.</text>
</comment>
<comment type="induction">
    <text evidence="5">Expression is induced by electrophiles, including 2-methylhydroquinone, catechol, menadione, and diamide.</text>
</comment>
<comment type="disruption phenotype">
    <text evidence="5">Deletion mutant displays reduced viability when exposed to electrophilic quinones.</text>
</comment>
<comment type="miscellaneous">
    <text evidence="2 5">NADH cannot be replaced with NADPH for both reductase activities (PubMed:11583992, PubMed:19666717). Quinone compounds are better substrates than the model azo substrate methyl red (PubMed:19666717). AzoR probably does not contribute to dye reduction in vivo (PubMed:19666717).</text>
</comment>
<comment type="similarity">
    <text evidence="1 10">Belongs to the azoreductase type 1 family.</text>
</comment>
<comment type="caution">
    <text evidence="2 11">Was originally thought to be an ACP phosphodiesterase, but ACP phosphodiesterase activity was not detected in vivo or in vitro in further analysis.</text>
</comment>
<proteinExistence type="evidence at protein level"/>
<feature type="initiator methionine" description="Removed" evidence="2 6">
    <location>
        <position position="1"/>
    </location>
</feature>
<feature type="chain" id="PRO_0000166310" description="FMN-dependent NADH:quinone oxidoreductase">
    <location>
        <begin position="2"/>
        <end position="201"/>
    </location>
</feature>
<feature type="binding site" evidence="1 3 4 13 14 15 16 17 18">
    <location>
        <position position="10"/>
    </location>
    <ligand>
        <name>FMN</name>
        <dbReference type="ChEBI" id="CHEBI:58210"/>
    </ligand>
</feature>
<feature type="binding site" evidence="1 3 4 13 14 15 16 17 18">
    <location>
        <begin position="16"/>
        <end position="18"/>
    </location>
    <ligand>
        <name>FMN</name>
        <dbReference type="ChEBI" id="CHEBI:58210"/>
    </ligand>
</feature>
<feature type="binding site" evidence="1 3 4 13 14 15 16 17 18">
    <location>
        <begin position="96"/>
        <end position="99"/>
    </location>
    <ligand>
        <name>FMN</name>
        <dbReference type="ChEBI" id="CHEBI:58210"/>
    </ligand>
</feature>
<feature type="binding site" evidence="3 4 13 14 15 16 17 18">
    <location>
        <begin position="140"/>
        <end position="145"/>
    </location>
    <ligand>
        <name>FMN</name>
        <dbReference type="ChEBI" id="CHEBI:58210"/>
    </ligand>
</feature>
<feature type="mutagenesis site" description="27-fold increase in the Vmax value for p-methyl red reduction." evidence="4">
    <original>R</original>
    <variation>A</variation>
    <location>
        <position position="60"/>
    </location>
</feature>
<feature type="mutagenesis site" description="10-fold increase in Km for NADH. Does not significantly affect Km for methyl red and p-methyl red." evidence="4">
    <original>Y</original>
    <variation>A</variation>
    <location>
        <position position="121"/>
    </location>
</feature>
<feature type="mutagenesis site" description="10-fold increase in Km for NADH. Does not significantly affect Km for methyl red and p-methyl red." evidence="4">
    <original>F</original>
    <variation>A</variation>
    <location>
        <position position="163"/>
    </location>
</feature>
<feature type="sequence conflict" description="In Ref. 1; BAA25408 and 5; BAA07684." evidence="10" ref="1 5">
    <original>DYFVEQWREKHSA</original>
    <variation>IILLNNGAKSTPR</variation>
    <location>
        <begin position="23"/>
        <end position="35"/>
    </location>
</feature>
<feature type="strand" evidence="19">
    <location>
        <begin position="3"/>
        <end position="8"/>
    </location>
</feature>
<feature type="helix" evidence="19">
    <location>
        <begin position="13"/>
        <end position="15"/>
    </location>
</feature>
<feature type="helix" evidence="19">
    <location>
        <begin position="17"/>
        <end position="32"/>
    </location>
</feature>
<feature type="strand" evidence="19">
    <location>
        <begin position="36"/>
        <end position="42"/>
    </location>
</feature>
<feature type="turn" evidence="19">
    <location>
        <begin position="43"/>
        <end position="47"/>
    </location>
</feature>
<feature type="helix" evidence="19">
    <location>
        <begin position="53"/>
        <end position="58"/>
    </location>
</feature>
<feature type="helix" evidence="19">
    <location>
        <begin position="68"/>
        <end position="86"/>
    </location>
</feature>
<feature type="strand" evidence="19">
    <location>
        <begin position="88"/>
        <end position="93"/>
    </location>
</feature>
<feature type="helix" evidence="19">
    <location>
        <begin position="103"/>
        <end position="112"/>
    </location>
</feature>
<feature type="turn" evidence="19">
    <location>
        <begin position="115"/>
        <end position="117"/>
    </location>
</feature>
<feature type="strand" evidence="19">
    <location>
        <begin position="118"/>
        <end position="122"/>
    </location>
</feature>
<feature type="strand" evidence="19">
    <location>
        <begin position="125"/>
        <end position="128"/>
    </location>
</feature>
<feature type="strand" evidence="19">
    <location>
        <begin position="134"/>
        <end position="140"/>
    </location>
</feature>
<feature type="helix" evidence="19">
    <location>
        <begin position="153"/>
        <end position="163"/>
    </location>
</feature>
<feature type="strand" evidence="19">
    <location>
        <begin position="169"/>
        <end position="174"/>
    </location>
</feature>
<feature type="helix" evidence="20">
    <location>
        <begin position="177"/>
        <end position="179"/>
    </location>
</feature>
<feature type="helix" evidence="19">
    <location>
        <begin position="181"/>
        <end position="199"/>
    </location>
</feature>
<keyword id="KW-0002">3D-structure</keyword>
<keyword id="KW-0903">Direct protein sequencing</keyword>
<keyword id="KW-0285">Flavoprotein</keyword>
<keyword id="KW-0288">FMN</keyword>
<keyword id="KW-0520">NAD</keyword>
<keyword id="KW-0560">Oxidoreductase</keyword>
<keyword id="KW-1185">Reference proteome</keyword>
<sequence>MSKVLVLKSSILAGYSQSNQLSDYFVEQWREKHSADEITVRDLAANPIPVLDGELVGALRPSDAPLTPRQQEALALSDELIAELKAHDVIVIAAPMYNFNISTQLKNYFDLVARAGVTFRYTENGPEGLVTGKKAIVITSRGGIHKDGPTDLVTPYLSTFLGFIGITDVKFVFAEGIAYGPEMAAKAQSDAKAAIDSIVSA</sequence>
<dbReference type="EC" id="1.6.5.-" evidence="1 5"/>
<dbReference type="EC" id="1.7.1.17" evidence="1 2"/>
<dbReference type="EMBL" id="D85081">
    <property type="protein sequence ID" value="BAA25408.1"/>
    <property type="molecule type" value="Genomic_DNA"/>
</dbReference>
<dbReference type="EMBL" id="U00096">
    <property type="protein sequence ID" value="AAC74494.1"/>
    <property type="molecule type" value="Genomic_DNA"/>
</dbReference>
<dbReference type="EMBL" id="AP009048">
    <property type="protein sequence ID" value="BAA15024.1"/>
    <property type="molecule type" value="Genomic_DNA"/>
</dbReference>
<dbReference type="EMBL" id="D42105">
    <property type="protein sequence ID" value="BAA07684.1"/>
    <property type="molecule type" value="Genomic_DNA"/>
</dbReference>
<dbReference type="PIR" id="G64892">
    <property type="entry name" value="G64892"/>
</dbReference>
<dbReference type="RefSeq" id="NP_415930.1">
    <property type="nucleotide sequence ID" value="NC_000913.3"/>
</dbReference>
<dbReference type="RefSeq" id="WP_000048950.1">
    <property type="nucleotide sequence ID" value="NZ_SSZK01000021.1"/>
</dbReference>
<dbReference type="PDB" id="1TIK">
    <property type="method" value="X-ray"/>
    <property type="resolution" value="2.30 A"/>
    <property type="chains" value="A=2-201"/>
</dbReference>
<dbReference type="PDB" id="1V4B">
    <property type="method" value="X-ray"/>
    <property type="resolution" value="1.80 A"/>
    <property type="chains" value="A=2-201"/>
</dbReference>
<dbReference type="PDB" id="2D5I">
    <property type="method" value="X-ray"/>
    <property type="resolution" value="2.20 A"/>
    <property type="chains" value="A=2-201"/>
</dbReference>
<dbReference type="PDB" id="2Z98">
    <property type="method" value="X-ray"/>
    <property type="resolution" value="1.40 A"/>
    <property type="chains" value="A=2-201"/>
</dbReference>
<dbReference type="PDB" id="2Z9B">
    <property type="method" value="X-ray"/>
    <property type="resolution" value="1.70 A"/>
    <property type="chains" value="A=2-201"/>
</dbReference>
<dbReference type="PDB" id="2Z9C">
    <property type="method" value="X-ray"/>
    <property type="resolution" value="2.30 A"/>
    <property type="chains" value="A=2-201"/>
</dbReference>
<dbReference type="PDB" id="2Z9D">
    <property type="method" value="X-ray"/>
    <property type="resolution" value="2.10 A"/>
    <property type="chains" value="A/B=2-201"/>
</dbReference>
<dbReference type="PDB" id="7N2X">
    <property type="method" value="X-ray"/>
    <property type="resolution" value="1.70 A"/>
    <property type="chains" value="A=1-201"/>
</dbReference>
<dbReference type="PDBsum" id="1TIK"/>
<dbReference type="PDBsum" id="1V4B"/>
<dbReference type="PDBsum" id="2D5I"/>
<dbReference type="PDBsum" id="2Z98"/>
<dbReference type="PDBsum" id="2Z9B"/>
<dbReference type="PDBsum" id="2Z9C"/>
<dbReference type="PDBsum" id="2Z9D"/>
<dbReference type="PDBsum" id="7N2X"/>
<dbReference type="SMR" id="P41407"/>
<dbReference type="BioGRID" id="4261518">
    <property type="interactions" value="20"/>
</dbReference>
<dbReference type="FunCoup" id="P41407">
    <property type="interactions" value="94"/>
</dbReference>
<dbReference type="STRING" id="511145.b1412"/>
<dbReference type="DrugBank" id="DB04392">
    <property type="generic name" value="Bishydroxy[2h-1-Benzopyran-2-One,1,2-Benzopyrone]"/>
</dbReference>
<dbReference type="DrugBank" id="DB03247">
    <property type="generic name" value="Flavin mononucleotide"/>
</dbReference>
<dbReference type="jPOST" id="P41407"/>
<dbReference type="PaxDb" id="511145-b1412"/>
<dbReference type="EnsemblBacteria" id="AAC74494">
    <property type="protein sequence ID" value="AAC74494"/>
    <property type="gene ID" value="b1412"/>
</dbReference>
<dbReference type="GeneID" id="947569"/>
<dbReference type="KEGG" id="ecj:JW1409"/>
<dbReference type="KEGG" id="eco:b1412"/>
<dbReference type="KEGG" id="ecoc:C3026_08225"/>
<dbReference type="PATRIC" id="fig|1411691.4.peg.859"/>
<dbReference type="EchoBASE" id="EB2558"/>
<dbReference type="eggNOG" id="COG1182">
    <property type="taxonomic scope" value="Bacteria"/>
</dbReference>
<dbReference type="HOGENOM" id="CLU_088964_0_0_6"/>
<dbReference type="InParanoid" id="P41407"/>
<dbReference type="OMA" id="FIARPRV"/>
<dbReference type="OrthoDB" id="9787136at2"/>
<dbReference type="PhylomeDB" id="P41407"/>
<dbReference type="BioCyc" id="EcoCyc:G6731-MONOMER"/>
<dbReference type="BioCyc" id="MetaCyc:G6731-MONOMER"/>
<dbReference type="BRENDA" id="1.7.1.17">
    <property type="organism ID" value="2026"/>
</dbReference>
<dbReference type="BRENDA" id="1.7.1.6">
    <property type="organism ID" value="2026"/>
</dbReference>
<dbReference type="SABIO-RK" id="P41407"/>
<dbReference type="EvolutionaryTrace" id="P41407"/>
<dbReference type="PRO" id="PR:P41407"/>
<dbReference type="Proteomes" id="UP000000625">
    <property type="component" value="Chromosome"/>
</dbReference>
<dbReference type="GO" id="GO:0005829">
    <property type="term" value="C:cytosol"/>
    <property type="evidence" value="ECO:0000314"/>
    <property type="project" value="EcoCyc"/>
</dbReference>
<dbReference type="GO" id="GO:0050446">
    <property type="term" value="F:azobenzene reductase activity"/>
    <property type="evidence" value="ECO:0000314"/>
    <property type="project" value="EcoCyc"/>
</dbReference>
<dbReference type="GO" id="GO:0009055">
    <property type="term" value="F:electron transfer activity"/>
    <property type="evidence" value="ECO:0007669"/>
    <property type="project" value="UniProtKB-UniRule"/>
</dbReference>
<dbReference type="GO" id="GO:0010181">
    <property type="term" value="F:FMN binding"/>
    <property type="evidence" value="ECO:0000314"/>
    <property type="project" value="EcoCyc"/>
</dbReference>
<dbReference type="GO" id="GO:0016652">
    <property type="term" value="F:oxidoreductase activity, acting on NAD(P)H as acceptor"/>
    <property type="evidence" value="ECO:0007669"/>
    <property type="project" value="UniProtKB-UniRule"/>
</dbReference>
<dbReference type="GO" id="GO:0016655">
    <property type="term" value="F:oxidoreductase activity, acting on NAD(P)H, quinone or similar compound as acceptor"/>
    <property type="evidence" value="ECO:0000314"/>
    <property type="project" value="EcoCyc"/>
</dbReference>
<dbReference type="GO" id="GO:0042803">
    <property type="term" value="F:protein homodimerization activity"/>
    <property type="evidence" value="ECO:0000314"/>
    <property type="project" value="EcoCyc"/>
</dbReference>
<dbReference type="GO" id="GO:0006979">
    <property type="term" value="P:response to oxidative stress"/>
    <property type="evidence" value="ECO:0000315"/>
    <property type="project" value="EcoCyc"/>
</dbReference>
<dbReference type="FunFam" id="3.40.50.360:FF:000010">
    <property type="entry name" value="FMN-dependent NADH-azoreductase"/>
    <property type="match status" value="1"/>
</dbReference>
<dbReference type="Gene3D" id="3.40.50.360">
    <property type="match status" value="1"/>
</dbReference>
<dbReference type="HAMAP" id="MF_01216">
    <property type="entry name" value="Azoreductase_type1"/>
    <property type="match status" value="1"/>
</dbReference>
<dbReference type="InterPro" id="IPR003680">
    <property type="entry name" value="Flavodoxin_fold"/>
</dbReference>
<dbReference type="InterPro" id="IPR029039">
    <property type="entry name" value="Flavoprotein-like_sf"/>
</dbReference>
<dbReference type="InterPro" id="IPR050104">
    <property type="entry name" value="FMN-dep_NADH:Q_OxRdtase_AzoR1"/>
</dbReference>
<dbReference type="InterPro" id="IPR023048">
    <property type="entry name" value="NADH:quinone_OxRdtase_FMN_depd"/>
</dbReference>
<dbReference type="PANTHER" id="PTHR43741">
    <property type="entry name" value="FMN-DEPENDENT NADH-AZOREDUCTASE 1"/>
    <property type="match status" value="1"/>
</dbReference>
<dbReference type="PANTHER" id="PTHR43741:SF2">
    <property type="entry name" value="FMN-DEPENDENT NADH:QUINONE OXIDOREDUCTASE"/>
    <property type="match status" value="1"/>
</dbReference>
<dbReference type="Pfam" id="PF02525">
    <property type="entry name" value="Flavodoxin_2"/>
    <property type="match status" value="1"/>
</dbReference>
<dbReference type="SUPFAM" id="SSF52218">
    <property type="entry name" value="Flavoproteins"/>
    <property type="match status" value="1"/>
</dbReference>
<accession>P41407</accession>
<accession>P77143</accession>
<accession>Q93V21</accession>
<organism>
    <name type="scientific">Escherichia coli (strain K12)</name>
    <dbReference type="NCBI Taxonomy" id="83333"/>
    <lineage>
        <taxon>Bacteria</taxon>
        <taxon>Pseudomonadati</taxon>
        <taxon>Pseudomonadota</taxon>
        <taxon>Gammaproteobacteria</taxon>
        <taxon>Enterobacterales</taxon>
        <taxon>Enterobacteriaceae</taxon>
        <taxon>Escherichia</taxon>
    </lineage>
</organism>
<gene>
    <name evidence="1 8" type="primary">azoR</name>
    <name type="synonym">acpD</name>
    <name type="ordered locus">b1412</name>
    <name type="ordered locus">JW1409</name>
</gene>